<reference key="1">
    <citation type="journal article" date="1992" name="Biosci. Biotechnol. Biochem.">
        <title>Cloning and sequencing of the xynA gene encoding xylanase A of Aspergillus kawachii.</title>
        <authorList>
            <person name="Ito K."/>
            <person name="Ikemasu T."/>
            <person name="Ishikawa T."/>
        </authorList>
    </citation>
    <scope>NUCLEOTIDE SEQUENCE [GENOMIC DNA]</scope>
    <scope>PROTEIN SEQUENCE OF 26-33; 41-54; 63-76 AND 76-100</scope>
    <scope>PYROGLUTAMATE FORMATION AT GLN-26</scope>
    <source>
        <strain>NBRC 4308</strain>
    </source>
</reference>
<reference key="2">
    <citation type="journal article" date="2011" name="Eukaryot. Cell">
        <title>Genome sequence of the white koji mold Aspergillus kawachii IFO 4308, used for brewing the Japanese distilled spirit shochu.</title>
        <authorList>
            <person name="Futagami T."/>
            <person name="Mori K."/>
            <person name="Yamashita A."/>
            <person name="Wada S."/>
            <person name="Kajiwara Y."/>
            <person name="Takashita H."/>
            <person name="Omori T."/>
            <person name="Takegawa K."/>
            <person name="Tashiro K."/>
            <person name="Kuhara S."/>
            <person name="Goto M."/>
        </authorList>
    </citation>
    <scope>NUCLEOTIDE SEQUENCE [LARGE SCALE GENOMIC DNA]</scope>
    <source>
        <strain>NBRC 4308</strain>
    </source>
</reference>
<accession>P33559</accession>
<accession>G7Y054</accession>
<proteinExistence type="evidence at protein level"/>
<name>XYNA_ASPKW</name>
<keyword id="KW-0119">Carbohydrate metabolism</keyword>
<keyword id="KW-0903">Direct protein sequencing</keyword>
<keyword id="KW-1015">Disulfide bond</keyword>
<keyword id="KW-0326">Glycosidase</keyword>
<keyword id="KW-0378">Hydrolase</keyword>
<keyword id="KW-0624">Polysaccharide degradation</keyword>
<keyword id="KW-0873">Pyrrolidone carboxylic acid</keyword>
<keyword id="KW-0964">Secreted</keyword>
<keyword id="KW-0732">Signal</keyword>
<keyword id="KW-0858">Xylan degradation</keyword>
<feature type="signal peptide" evidence="4">
    <location>
        <begin position="1"/>
        <end position="25"/>
    </location>
</feature>
<feature type="chain" id="PRO_0000007965" description="Endo-1,4-beta-xylanase A">
    <location>
        <begin position="26"/>
        <end position="327"/>
    </location>
</feature>
<feature type="domain" description="GH10" evidence="2">
    <location>
        <begin position="55"/>
        <end position="326"/>
    </location>
</feature>
<feature type="active site" description="Proton donor" evidence="1">
    <location>
        <position position="157"/>
    </location>
</feature>
<feature type="active site" description="Nucleophile" evidence="3">
    <location>
        <position position="263"/>
    </location>
</feature>
<feature type="modified residue" description="Pyrrolidone carboxylic acid" evidence="4">
    <location>
        <position position="26"/>
    </location>
</feature>
<feature type="disulfide bond" evidence="1">
    <location>
        <begin position="281"/>
        <end position="287"/>
    </location>
</feature>
<feature type="sequence conflict" description="In Ref. 1; BAA03575/AA sequence." evidence="5" ref="1">
    <original>T</original>
    <variation>S</variation>
    <location>
        <position position="33"/>
    </location>
</feature>
<feature type="sequence conflict" description="In Ref. 1; BAA03575." evidence="5" ref="1">
    <original>I</original>
    <variation>V</variation>
    <location>
        <position position="61"/>
    </location>
</feature>
<feature type="sequence conflict" description="In Ref. 1; BAA03575." evidence="5" ref="1">
    <original>E</original>
    <variation>D</variation>
    <location>
        <position position="176"/>
    </location>
</feature>
<gene>
    <name type="primary">xynA</name>
    <name type="ORF">AKAW_10666</name>
</gene>
<dbReference type="EC" id="3.2.1.8"/>
<dbReference type="EMBL" id="D14847">
    <property type="protein sequence ID" value="BAA03575.1"/>
    <property type="molecule type" value="Genomic_DNA"/>
</dbReference>
<dbReference type="EMBL" id="DF126496">
    <property type="protein sequence ID" value="GAA92552.1"/>
    <property type="status" value="ALT_SEQ"/>
    <property type="molecule type" value="Genomic_DNA"/>
</dbReference>
<dbReference type="SMR" id="P33559"/>
<dbReference type="STRING" id="1033177.P33559"/>
<dbReference type="CAZy" id="GH10">
    <property type="family name" value="Glycoside Hydrolase Family 10"/>
</dbReference>
<dbReference type="eggNOG" id="ENOG502QSCW">
    <property type="taxonomic scope" value="Eukaryota"/>
</dbReference>
<dbReference type="InParanoid" id="P33559"/>
<dbReference type="OrthoDB" id="9074at5052"/>
<dbReference type="UniPathway" id="UPA00114"/>
<dbReference type="GO" id="GO:0005576">
    <property type="term" value="C:extracellular region"/>
    <property type="evidence" value="ECO:0007669"/>
    <property type="project" value="UniProtKB-SubCell"/>
</dbReference>
<dbReference type="GO" id="GO:0031176">
    <property type="term" value="F:endo-1,4-beta-xylanase activity"/>
    <property type="evidence" value="ECO:0007669"/>
    <property type="project" value="UniProtKB-EC"/>
</dbReference>
<dbReference type="GO" id="GO:0045493">
    <property type="term" value="P:xylan catabolic process"/>
    <property type="evidence" value="ECO:0007669"/>
    <property type="project" value="UniProtKB-UniPathway"/>
</dbReference>
<dbReference type="FunFam" id="3.20.20.80:FF:000094">
    <property type="entry name" value="Endo-1,4-beta-xylanase"/>
    <property type="match status" value="1"/>
</dbReference>
<dbReference type="Gene3D" id="3.20.20.80">
    <property type="entry name" value="Glycosidases"/>
    <property type="match status" value="1"/>
</dbReference>
<dbReference type="InterPro" id="IPR044846">
    <property type="entry name" value="GH10"/>
</dbReference>
<dbReference type="InterPro" id="IPR031158">
    <property type="entry name" value="GH10_AS"/>
</dbReference>
<dbReference type="InterPro" id="IPR001000">
    <property type="entry name" value="GH10_dom"/>
</dbReference>
<dbReference type="InterPro" id="IPR017853">
    <property type="entry name" value="Glycoside_hydrolase_SF"/>
</dbReference>
<dbReference type="PANTHER" id="PTHR31490:SF76">
    <property type="entry name" value="ENDO-1,4-BETA-XYLANASE C"/>
    <property type="match status" value="1"/>
</dbReference>
<dbReference type="PANTHER" id="PTHR31490">
    <property type="entry name" value="GLYCOSYL HYDROLASE"/>
    <property type="match status" value="1"/>
</dbReference>
<dbReference type="Pfam" id="PF00331">
    <property type="entry name" value="Glyco_hydro_10"/>
    <property type="match status" value="1"/>
</dbReference>
<dbReference type="PRINTS" id="PR00134">
    <property type="entry name" value="GLHYDRLASE10"/>
</dbReference>
<dbReference type="SMART" id="SM00633">
    <property type="entry name" value="Glyco_10"/>
    <property type="match status" value="1"/>
</dbReference>
<dbReference type="SUPFAM" id="SSF51445">
    <property type="entry name" value="(Trans)glycosidases"/>
    <property type="match status" value="1"/>
</dbReference>
<dbReference type="PROSITE" id="PS00591">
    <property type="entry name" value="GH10_1"/>
    <property type="match status" value="1"/>
</dbReference>
<dbReference type="PROSITE" id="PS51760">
    <property type="entry name" value="GH10_2"/>
    <property type="match status" value="1"/>
</dbReference>
<organism>
    <name type="scientific">Aspergillus kawachii (strain NBRC 4308)</name>
    <name type="common">White koji mold</name>
    <name type="synonym">Aspergillus awamori var. kawachi</name>
    <dbReference type="NCBI Taxonomy" id="1033177"/>
    <lineage>
        <taxon>Eukaryota</taxon>
        <taxon>Fungi</taxon>
        <taxon>Dikarya</taxon>
        <taxon>Ascomycota</taxon>
        <taxon>Pezizomycotina</taxon>
        <taxon>Eurotiomycetes</taxon>
        <taxon>Eurotiomycetidae</taxon>
        <taxon>Eurotiales</taxon>
        <taxon>Aspergillaceae</taxon>
        <taxon>Aspergillus</taxon>
        <taxon>Aspergillus subgen. Circumdati</taxon>
    </lineage>
</organism>
<sequence length="327" mass="35480">MVQIKAAALAMLFASHVLSEPIEPRQASVSIDTKFKAHGKKYLGNIGDQYTLTKNSKTPAIIKADFGALTPENSMKWDATEPSRGQFSFSGSDYLVNFAQSNNKLIRGHTLVWHSQLPSWVQAITDKNTLIEVMKNHITTVMQHYKGKIYAWDVVNEIFNEDGSLRDSVFYKVIGEDYVRIAFETARAADPNAKLYINDYNLDSASYPKLAGMVSHVKKWIEAGIPIDGIGSQTHLSAGGGAGISGALNALAGAGTKEIAVTELDIAGASSTDYVEVVEACLDQPKCIGITVWGVADPDSWRSSSTPLLFDSNYNPKPAYTAIANAL</sequence>
<evidence type="ECO:0000250" key="1"/>
<evidence type="ECO:0000255" key="2">
    <source>
        <dbReference type="PROSITE-ProRule" id="PRU01096"/>
    </source>
</evidence>
<evidence type="ECO:0000255" key="3">
    <source>
        <dbReference type="PROSITE-ProRule" id="PRU10061"/>
    </source>
</evidence>
<evidence type="ECO:0000269" key="4">
    <source>
    </source>
</evidence>
<evidence type="ECO:0000305" key="5"/>
<comment type="catalytic activity">
    <reaction>
        <text>Endohydrolysis of (1-&gt;4)-beta-D-xylosidic linkages in xylans.</text>
        <dbReference type="EC" id="3.2.1.8"/>
    </reaction>
</comment>
<comment type="pathway">
    <text>Glycan degradation; xylan degradation.</text>
</comment>
<comment type="subcellular location">
    <subcellularLocation>
        <location>Secreted</location>
    </subcellularLocation>
</comment>
<comment type="similarity">
    <text evidence="5">Belongs to the glycosyl hydrolase 10 (cellulase F) family.</text>
</comment>
<comment type="sequence caution" evidence="5">
    <conflict type="erroneous gene model prediction">
        <sequence resource="EMBL-CDS" id="GAA92552"/>
    </conflict>
</comment>
<protein>
    <recommendedName>
        <fullName>Endo-1,4-beta-xylanase A</fullName>
        <shortName>Xylanase A</shortName>
        <ecNumber>3.2.1.8</ecNumber>
    </recommendedName>
    <alternativeName>
        <fullName>1,4-beta-D-xylan xylanohydrolase A</fullName>
    </alternativeName>
</protein>